<feature type="chain" id="PRO_1000121601" description="Large ribosomal subunit protein bL28">
    <location>
        <begin position="1"/>
        <end position="72"/>
    </location>
</feature>
<organism>
    <name type="scientific">Chlorobium limicola (strain DSM 245 / NBRC 103803 / 6330)</name>
    <dbReference type="NCBI Taxonomy" id="290315"/>
    <lineage>
        <taxon>Bacteria</taxon>
        <taxon>Pseudomonadati</taxon>
        <taxon>Chlorobiota</taxon>
        <taxon>Chlorobiia</taxon>
        <taxon>Chlorobiales</taxon>
        <taxon>Chlorobiaceae</taxon>
        <taxon>Chlorobium/Pelodictyon group</taxon>
        <taxon>Chlorobium</taxon>
    </lineage>
</organism>
<proteinExistence type="inferred from homology"/>
<sequence length="72" mass="8205">MSKVCVLTGKRPKYGNNVSHANNHTRTRFEPNLHTKRIWIEEEKCWVKVKLSAKAMKIISKTGTAKLAALLK</sequence>
<evidence type="ECO:0000255" key="1">
    <source>
        <dbReference type="HAMAP-Rule" id="MF_00373"/>
    </source>
</evidence>
<evidence type="ECO:0000305" key="2"/>
<gene>
    <name evidence="1" type="primary">rpmB</name>
    <name type="ordered locus">Clim_0629</name>
</gene>
<keyword id="KW-0687">Ribonucleoprotein</keyword>
<keyword id="KW-0689">Ribosomal protein</keyword>
<reference key="1">
    <citation type="submission" date="2008-05" db="EMBL/GenBank/DDBJ databases">
        <title>Complete sequence of Chlorobium limicola DSM 245.</title>
        <authorList>
            <consortium name="US DOE Joint Genome Institute"/>
            <person name="Lucas S."/>
            <person name="Copeland A."/>
            <person name="Lapidus A."/>
            <person name="Glavina del Rio T."/>
            <person name="Dalin E."/>
            <person name="Tice H."/>
            <person name="Bruce D."/>
            <person name="Goodwin L."/>
            <person name="Pitluck S."/>
            <person name="Schmutz J."/>
            <person name="Larimer F."/>
            <person name="Land M."/>
            <person name="Hauser L."/>
            <person name="Kyrpides N."/>
            <person name="Ovchinnikova G."/>
            <person name="Zhao F."/>
            <person name="Li T."/>
            <person name="Liu Z."/>
            <person name="Overmann J."/>
            <person name="Bryant D.A."/>
            <person name="Richardson P."/>
        </authorList>
    </citation>
    <scope>NUCLEOTIDE SEQUENCE [LARGE SCALE GENOMIC DNA]</scope>
    <source>
        <strain>DSM 245 / NBRC 103803 / 6330</strain>
    </source>
</reference>
<comment type="similarity">
    <text evidence="1">Belongs to the bacterial ribosomal protein bL28 family.</text>
</comment>
<name>RL28_CHLL2</name>
<protein>
    <recommendedName>
        <fullName evidence="1">Large ribosomal subunit protein bL28</fullName>
    </recommendedName>
    <alternativeName>
        <fullName evidence="2">50S ribosomal protein L28</fullName>
    </alternativeName>
</protein>
<accession>B3EH36</accession>
<dbReference type="EMBL" id="CP001097">
    <property type="protein sequence ID" value="ACD89716.1"/>
    <property type="molecule type" value="Genomic_DNA"/>
</dbReference>
<dbReference type="RefSeq" id="WP_012465597.1">
    <property type="nucleotide sequence ID" value="NC_010803.1"/>
</dbReference>
<dbReference type="SMR" id="B3EH36"/>
<dbReference type="STRING" id="290315.Clim_0629"/>
<dbReference type="KEGG" id="cli:Clim_0629"/>
<dbReference type="eggNOG" id="COG0227">
    <property type="taxonomic scope" value="Bacteria"/>
</dbReference>
<dbReference type="HOGENOM" id="CLU_064548_3_1_10"/>
<dbReference type="OrthoDB" id="9805609at2"/>
<dbReference type="Proteomes" id="UP000008841">
    <property type="component" value="Chromosome"/>
</dbReference>
<dbReference type="GO" id="GO:1990904">
    <property type="term" value="C:ribonucleoprotein complex"/>
    <property type="evidence" value="ECO:0007669"/>
    <property type="project" value="UniProtKB-KW"/>
</dbReference>
<dbReference type="GO" id="GO:0005840">
    <property type="term" value="C:ribosome"/>
    <property type="evidence" value="ECO:0007669"/>
    <property type="project" value="UniProtKB-KW"/>
</dbReference>
<dbReference type="GO" id="GO:0003735">
    <property type="term" value="F:structural constituent of ribosome"/>
    <property type="evidence" value="ECO:0007669"/>
    <property type="project" value="InterPro"/>
</dbReference>
<dbReference type="GO" id="GO:0006412">
    <property type="term" value="P:translation"/>
    <property type="evidence" value="ECO:0007669"/>
    <property type="project" value="UniProtKB-UniRule"/>
</dbReference>
<dbReference type="FunFam" id="2.30.170.40:FF:000001">
    <property type="entry name" value="50S ribosomal protein L28"/>
    <property type="match status" value="1"/>
</dbReference>
<dbReference type="Gene3D" id="2.30.170.40">
    <property type="entry name" value="Ribosomal protein L28/L24"/>
    <property type="match status" value="1"/>
</dbReference>
<dbReference type="HAMAP" id="MF_00373">
    <property type="entry name" value="Ribosomal_bL28"/>
    <property type="match status" value="1"/>
</dbReference>
<dbReference type="InterPro" id="IPR026569">
    <property type="entry name" value="Ribosomal_bL28"/>
</dbReference>
<dbReference type="InterPro" id="IPR034704">
    <property type="entry name" value="Ribosomal_bL28/bL31-like_sf"/>
</dbReference>
<dbReference type="InterPro" id="IPR001383">
    <property type="entry name" value="Ribosomal_bL28_bact-type"/>
</dbReference>
<dbReference type="InterPro" id="IPR037147">
    <property type="entry name" value="Ribosomal_bL28_sf"/>
</dbReference>
<dbReference type="NCBIfam" id="TIGR00009">
    <property type="entry name" value="L28"/>
    <property type="match status" value="1"/>
</dbReference>
<dbReference type="PANTHER" id="PTHR13528">
    <property type="entry name" value="39S RIBOSOMAL PROTEIN L28, MITOCHONDRIAL"/>
    <property type="match status" value="1"/>
</dbReference>
<dbReference type="PANTHER" id="PTHR13528:SF2">
    <property type="entry name" value="LARGE RIBOSOMAL SUBUNIT PROTEIN BL28M"/>
    <property type="match status" value="1"/>
</dbReference>
<dbReference type="Pfam" id="PF00830">
    <property type="entry name" value="Ribosomal_L28"/>
    <property type="match status" value="1"/>
</dbReference>
<dbReference type="SUPFAM" id="SSF143800">
    <property type="entry name" value="L28p-like"/>
    <property type="match status" value="1"/>
</dbReference>